<evidence type="ECO:0000255" key="1">
    <source>
        <dbReference type="HAMAP-Rule" id="MF_00093"/>
    </source>
</evidence>
<evidence type="ECO:0000256" key="2">
    <source>
        <dbReference type="SAM" id="MobiDB-lite"/>
    </source>
</evidence>
<comment type="function">
    <text evidence="1">Peptide chain release factor 1 directs the termination of translation in response to the peptide chain termination codons UAG and UAA.</text>
</comment>
<comment type="subcellular location">
    <subcellularLocation>
        <location evidence="1">Cytoplasm</location>
    </subcellularLocation>
</comment>
<comment type="PTM">
    <text evidence="1">Methylated by PrmC. Methylation increases the termination efficiency of RF1.</text>
</comment>
<comment type="similarity">
    <text evidence="1">Belongs to the prokaryotic/mitochondrial release factor family.</text>
</comment>
<feature type="chain" id="PRO_0000263397" description="Peptide chain release factor 1">
    <location>
        <begin position="1"/>
        <end position="360"/>
    </location>
</feature>
<feature type="region of interest" description="Disordered" evidence="2">
    <location>
        <begin position="291"/>
        <end position="312"/>
    </location>
</feature>
<feature type="compositionally biased region" description="Basic and acidic residues" evidence="2">
    <location>
        <begin position="291"/>
        <end position="308"/>
    </location>
</feature>
<feature type="modified residue" description="N5-methylglutamine" evidence="1">
    <location>
        <position position="235"/>
    </location>
</feature>
<keyword id="KW-0963">Cytoplasm</keyword>
<keyword id="KW-0488">Methylation</keyword>
<keyword id="KW-0648">Protein biosynthesis</keyword>
<proteinExistence type="inferred from homology"/>
<gene>
    <name evidence="1" type="primary">prfA</name>
    <name type="ordered locus">YPTB2005</name>
</gene>
<name>RF1_YERPS</name>
<sequence>MKSSIVAKLEALQERHEEVLAYLGDASVIADQDRFRALSREYAQLTDVTRCFKEWRSAQDDIEAAEMMLDDLEMREMAQEELKIAKARSEELEQQLQVLLLPKDPDDERDCFLEIRAGTGGDEAAIFAGDMFRMYSRYAETRRWKVEIMSASEGEHGGYKEVIAKISGDGVFGQLKFESGGHRVQRVPETESQGRIHTSACTVAVMPAIPEAELPEINAGDLRIDTFRSSGAGGQHVNTTDSAIRITHIPTGIVVECQDERSQHKNKAKAMSVLGARIRAAEMQKRQLAEASERRNLLGTGDRSDRNRTYNFPQGRVTDHRINLTLYRLDEVMEGKLDMLIQPIVQEYQADQLSALSEQD</sequence>
<dbReference type="EMBL" id="BX936398">
    <property type="protein sequence ID" value="CAH21243.1"/>
    <property type="molecule type" value="Genomic_DNA"/>
</dbReference>
<dbReference type="RefSeq" id="WP_011192398.1">
    <property type="nucleotide sequence ID" value="NC_006155.1"/>
</dbReference>
<dbReference type="SMR" id="Q66AX5"/>
<dbReference type="GeneID" id="49786006"/>
<dbReference type="KEGG" id="ypo:BZ17_462"/>
<dbReference type="KEGG" id="yps:YPTB2005"/>
<dbReference type="PATRIC" id="fig|273123.14.peg.491"/>
<dbReference type="Proteomes" id="UP000001011">
    <property type="component" value="Chromosome"/>
</dbReference>
<dbReference type="GO" id="GO:0005737">
    <property type="term" value="C:cytoplasm"/>
    <property type="evidence" value="ECO:0007669"/>
    <property type="project" value="UniProtKB-SubCell"/>
</dbReference>
<dbReference type="GO" id="GO:0016149">
    <property type="term" value="F:translation release factor activity, codon specific"/>
    <property type="evidence" value="ECO:0007669"/>
    <property type="project" value="UniProtKB-UniRule"/>
</dbReference>
<dbReference type="FunFam" id="3.30.160.20:FF:000004">
    <property type="entry name" value="Peptide chain release factor 1"/>
    <property type="match status" value="1"/>
</dbReference>
<dbReference type="FunFam" id="3.30.70.1660:FF:000002">
    <property type="entry name" value="Peptide chain release factor 1"/>
    <property type="match status" value="1"/>
</dbReference>
<dbReference type="FunFam" id="3.30.70.1660:FF:000004">
    <property type="entry name" value="Peptide chain release factor 1"/>
    <property type="match status" value="1"/>
</dbReference>
<dbReference type="Gene3D" id="3.30.160.20">
    <property type="match status" value="1"/>
</dbReference>
<dbReference type="Gene3D" id="3.30.70.1660">
    <property type="match status" value="1"/>
</dbReference>
<dbReference type="Gene3D" id="6.10.140.1950">
    <property type="match status" value="1"/>
</dbReference>
<dbReference type="HAMAP" id="MF_00093">
    <property type="entry name" value="Rel_fac_1"/>
    <property type="match status" value="1"/>
</dbReference>
<dbReference type="InterPro" id="IPR005139">
    <property type="entry name" value="PCRF"/>
</dbReference>
<dbReference type="InterPro" id="IPR000352">
    <property type="entry name" value="Pep_chain_release_fac_I"/>
</dbReference>
<dbReference type="InterPro" id="IPR045853">
    <property type="entry name" value="Pep_chain_release_fac_I_sf"/>
</dbReference>
<dbReference type="InterPro" id="IPR050057">
    <property type="entry name" value="Prokaryotic/Mito_RF"/>
</dbReference>
<dbReference type="InterPro" id="IPR004373">
    <property type="entry name" value="RF-1"/>
</dbReference>
<dbReference type="NCBIfam" id="TIGR00019">
    <property type="entry name" value="prfA"/>
    <property type="match status" value="1"/>
</dbReference>
<dbReference type="NCBIfam" id="NF001859">
    <property type="entry name" value="PRK00591.1"/>
    <property type="match status" value="1"/>
</dbReference>
<dbReference type="PANTHER" id="PTHR43804">
    <property type="entry name" value="LD18447P"/>
    <property type="match status" value="1"/>
</dbReference>
<dbReference type="PANTHER" id="PTHR43804:SF7">
    <property type="entry name" value="LD18447P"/>
    <property type="match status" value="1"/>
</dbReference>
<dbReference type="Pfam" id="PF03462">
    <property type="entry name" value="PCRF"/>
    <property type="match status" value="1"/>
</dbReference>
<dbReference type="Pfam" id="PF00472">
    <property type="entry name" value="RF-1"/>
    <property type="match status" value="1"/>
</dbReference>
<dbReference type="SMART" id="SM00937">
    <property type="entry name" value="PCRF"/>
    <property type="match status" value="1"/>
</dbReference>
<dbReference type="SUPFAM" id="SSF75620">
    <property type="entry name" value="Release factor"/>
    <property type="match status" value="1"/>
</dbReference>
<dbReference type="PROSITE" id="PS00745">
    <property type="entry name" value="RF_PROK_I"/>
    <property type="match status" value="1"/>
</dbReference>
<protein>
    <recommendedName>
        <fullName evidence="1">Peptide chain release factor 1</fullName>
        <shortName evidence="1">RF-1</shortName>
    </recommendedName>
</protein>
<accession>Q66AX5</accession>
<reference key="1">
    <citation type="journal article" date="2004" name="Proc. Natl. Acad. Sci. U.S.A.">
        <title>Insights into the evolution of Yersinia pestis through whole-genome comparison with Yersinia pseudotuberculosis.</title>
        <authorList>
            <person name="Chain P.S.G."/>
            <person name="Carniel E."/>
            <person name="Larimer F.W."/>
            <person name="Lamerdin J."/>
            <person name="Stoutland P.O."/>
            <person name="Regala W.M."/>
            <person name="Georgescu A.M."/>
            <person name="Vergez L.M."/>
            <person name="Land M.L."/>
            <person name="Motin V.L."/>
            <person name="Brubaker R.R."/>
            <person name="Fowler J."/>
            <person name="Hinnebusch J."/>
            <person name="Marceau M."/>
            <person name="Medigue C."/>
            <person name="Simonet M."/>
            <person name="Chenal-Francisque V."/>
            <person name="Souza B."/>
            <person name="Dacheux D."/>
            <person name="Elliott J.M."/>
            <person name="Derbise A."/>
            <person name="Hauser L.J."/>
            <person name="Garcia E."/>
        </authorList>
    </citation>
    <scope>NUCLEOTIDE SEQUENCE [LARGE SCALE GENOMIC DNA]</scope>
    <source>
        <strain>IP32953</strain>
    </source>
</reference>
<organism>
    <name type="scientific">Yersinia pseudotuberculosis serotype I (strain IP32953)</name>
    <dbReference type="NCBI Taxonomy" id="273123"/>
    <lineage>
        <taxon>Bacteria</taxon>
        <taxon>Pseudomonadati</taxon>
        <taxon>Pseudomonadota</taxon>
        <taxon>Gammaproteobacteria</taxon>
        <taxon>Enterobacterales</taxon>
        <taxon>Yersiniaceae</taxon>
        <taxon>Yersinia</taxon>
    </lineage>
</organism>